<sequence>MAITPTQLLDWKRQQRPIVALTAWDTAIASVLDAAGVEIILVGDSLGMVALGYETTLPVSLDTMIHHTAAVKRGVQRALVVCDLPFLTYQESPAQAMGSAGRVLQETGAQAVKLEGGHPRMVETVARLTEVGIPVMGHVGLTPQSVHQLGYRQQGQDPATAEKILHQAIALAEAGVFAIVLEHIPSELAASITEQLPIPTIGIGAGPQCDGQVLVTADLLGLTVKQPPFAPAYLNLRHTITETVHKFSGEVRQRQFPRRG</sequence>
<dbReference type="EC" id="2.1.2.11" evidence="1"/>
<dbReference type="EMBL" id="BA000022">
    <property type="protein sequence ID" value="BAA10813.1"/>
    <property type="molecule type" value="Genomic_DNA"/>
</dbReference>
<dbReference type="EMBL" id="L47126">
    <property type="protein sequence ID" value="AAA85381.1"/>
    <property type="molecule type" value="Genomic_DNA"/>
</dbReference>
<dbReference type="PIR" id="S75966">
    <property type="entry name" value="S75966"/>
</dbReference>
<dbReference type="SMR" id="P52997"/>
<dbReference type="FunCoup" id="P52997">
    <property type="interactions" value="365"/>
</dbReference>
<dbReference type="STRING" id="1148.gene:10500317"/>
<dbReference type="PaxDb" id="1148-1001326"/>
<dbReference type="EnsemblBacteria" id="BAA10813">
    <property type="protein sequence ID" value="BAA10813"/>
    <property type="gene ID" value="BAA10813"/>
</dbReference>
<dbReference type="KEGG" id="syn:slr0526"/>
<dbReference type="eggNOG" id="COG0413">
    <property type="taxonomic scope" value="Bacteria"/>
</dbReference>
<dbReference type="InParanoid" id="P52997"/>
<dbReference type="PhylomeDB" id="P52997"/>
<dbReference type="UniPathway" id="UPA00028">
    <property type="reaction ID" value="UER00003"/>
</dbReference>
<dbReference type="Proteomes" id="UP000001425">
    <property type="component" value="Chromosome"/>
</dbReference>
<dbReference type="GO" id="GO:0005737">
    <property type="term" value="C:cytoplasm"/>
    <property type="evidence" value="ECO:0000318"/>
    <property type="project" value="GO_Central"/>
</dbReference>
<dbReference type="GO" id="GO:0003864">
    <property type="term" value="F:3-methyl-2-oxobutanoate hydroxymethyltransferase activity"/>
    <property type="evidence" value="ECO:0000318"/>
    <property type="project" value="GO_Central"/>
</dbReference>
<dbReference type="GO" id="GO:0000287">
    <property type="term" value="F:magnesium ion binding"/>
    <property type="evidence" value="ECO:0000318"/>
    <property type="project" value="GO_Central"/>
</dbReference>
<dbReference type="GO" id="GO:0015940">
    <property type="term" value="P:pantothenate biosynthetic process"/>
    <property type="evidence" value="ECO:0000318"/>
    <property type="project" value="GO_Central"/>
</dbReference>
<dbReference type="CDD" id="cd06557">
    <property type="entry name" value="KPHMT-like"/>
    <property type="match status" value="1"/>
</dbReference>
<dbReference type="FunFam" id="3.20.20.60:FF:000003">
    <property type="entry name" value="3-methyl-2-oxobutanoate hydroxymethyltransferase"/>
    <property type="match status" value="1"/>
</dbReference>
<dbReference type="Gene3D" id="3.20.20.60">
    <property type="entry name" value="Phosphoenolpyruvate-binding domains"/>
    <property type="match status" value="1"/>
</dbReference>
<dbReference type="HAMAP" id="MF_00156">
    <property type="entry name" value="PanB"/>
    <property type="match status" value="1"/>
</dbReference>
<dbReference type="InterPro" id="IPR003700">
    <property type="entry name" value="Pantoate_hydroxy_MeTrfase"/>
</dbReference>
<dbReference type="InterPro" id="IPR015813">
    <property type="entry name" value="Pyrv/PenolPyrv_kinase-like_dom"/>
</dbReference>
<dbReference type="InterPro" id="IPR040442">
    <property type="entry name" value="Pyrv_kinase-like_dom_sf"/>
</dbReference>
<dbReference type="NCBIfam" id="TIGR00222">
    <property type="entry name" value="panB"/>
    <property type="match status" value="1"/>
</dbReference>
<dbReference type="NCBIfam" id="NF001452">
    <property type="entry name" value="PRK00311.1"/>
    <property type="match status" value="1"/>
</dbReference>
<dbReference type="PANTHER" id="PTHR20881">
    <property type="entry name" value="3-METHYL-2-OXOBUTANOATE HYDROXYMETHYLTRANSFERASE"/>
    <property type="match status" value="1"/>
</dbReference>
<dbReference type="PANTHER" id="PTHR20881:SF0">
    <property type="entry name" value="3-METHYL-2-OXOBUTANOATE HYDROXYMETHYLTRANSFERASE"/>
    <property type="match status" value="1"/>
</dbReference>
<dbReference type="Pfam" id="PF02548">
    <property type="entry name" value="Pantoate_transf"/>
    <property type="match status" value="1"/>
</dbReference>
<dbReference type="PIRSF" id="PIRSF000388">
    <property type="entry name" value="Pantoate_hydroxy_MeTrfase"/>
    <property type="match status" value="1"/>
</dbReference>
<dbReference type="SUPFAM" id="SSF51621">
    <property type="entry name" value="Phosphoenolpyruvate/pyruvate domain"/>
    <property type="match status" value="1"/>
</dbReference>
<evidence type="ECO:0000255" key="1">
    <source>
        <dbReference type="HAMAP-Rule" id="MF_00156"/>
    </source>
</evidence>
<accession>P52997</accession>
<accession>Q6LE73</accession>
<keyword id="KW-0963">Cytoplasm</keyword>
<keyword id="KW-0460">Magnesium</keyword>
<keyword id="KW-0479">Metal-binding</keyword>
<keyword id="KW-0566">Pantothenate biosynthesis</keyword>
<keyword id="KW-1185">Reference proteome</keyword>
<keyword id="KW-0808">Transferase</keyword>
<name>PANB_SYNY3</name>
<organism>
    <name type="scientific">Synechocystis sp. (strain ATCC 27184 / PCC 6803 / Kazusa)</name>
    <dbReference type="NCBI Taxonomy" id="1111708"/>
    <lineage>
        <taxon>Bacteria</taxon>
        <taxon>Bacillati</taxon>
        <taxon>Cyanobacteriota</taxon>
        <taxon>Cyanophyceae</taxon>
        <taxon>Synechococcales</taxon>
        <taxon>Merismopediaceae</taxon>
        <taxon>Synechocystis</taxon>
    </lineage>
</organism>
<comment type="function">
    <text evidence="1">Catalyzes the reversible reaction in which hydroxymethyl group from 5,10-methylenetetrahydrofolate is transferred onto alpha-ketoisovalerate to form ketopantoate.</text>
</comment>
<comment type="catalytic activity">
    <reaction evidence="1">
        <text>3-methyl-2-oxobutanoate + (6R)-5,10-methylene-5,6,7,8-tetrahydrofolate + H2O = 2-dehydropantoate + (6S)-5,6,7,8-tetrahydrofolate</text>
        <dbReference type="Rhea" id="RHEA:11824"/>
        <dbReference type="ChEBI" id="CHEBI:11561"/>
        <dbReference type="ChEBI" id="CHEBI:11851"/>
        <dbReference type="ChEBI" id="CHEBI:15377"/>
        <dbReference type="ChEBI" id="CHEBI:15636"/>
        <dbReference type="ChEBI" id="CHEBI:57453"/>
        <dbReference type="EC" id="2.1.2.11"/>
    </reaction>
</comment>
<comment type="cofactor">
    <cofactor evidence="1">
        <name>Mg(2+)</name>
        <dbReference type="ChEBI" id="CHEBI:18420"/>
    </cofactor>
    <text evidence="1">Binds 1 Mg(2+) ion per subunit.</text>
</comment>
<comment type="pathway">
    <text evidence="1">Cofactor biosynthesis; (R)-pantothenate biosynthesis; (R)-pantoate from 3-methyl-2-oxobutanoate: step 1/2.</text>
</comment>
<comment type="subunit">
    <text evidence="1">Homodecamer; pentamer of dimers.</text>
</comment>
<comment type="subcellular location">
    <subcellularLocation>
        <location evidence="1">Cytoplasm</location>
    </subcellularLocation>
</comment>
<comment type="similarity">
    <text evidence="1">Belongs to the PanB family.</text>
</comment>
<reference key="1">
    <citation type="journal article" date="1995" name="DNA Res.">
        <title>Sequence analysis of the genome of the unicellular cyanobacterium Synechocystis sp. strain PCC6803. I. Sequence features in the 1 Mb region from map positions 64% to 92% of the genome.</title>
        <authorList>
            <person name="Kaneko T."/>
            <person name="Tanaka A."/>
            <person name="Sato S."/>
            <person name="Kotani H."/>
            <person name="Sazuka T."/>
            <person name="Miyajima N."/>
            <person name="Sugiura M."/>
            <person name="Tabata S."/>
        </authorList>
    </citation>
    <scope>NUCLEOTIDE SEQUENCE [LARGE SCALE GENOMIC DNA]</scope>
    <source>
        <strain>ATCC 27184 / PCC 6803 / N-1</strain>
    </source>
</reference>
<reference key="2">
    <citation type="journal article" date="1996" name="Plant Mol. Biol.">
        <title>Cloning and characterization of the chlorophyll biosynthesis gene chlM from Synechocystis PCC 6803 by complementation of a bacteriochlorophyll biosynthesis mutant of Rhodobacter capsulatus.</title>
        <authorList>
            <person name="Smith C.A."/>
            <person name="Suzuki J.Y."/>
            <person name="Bauer C.E."/>
        </authorList>
    </citation>
    <scope>NUCLEOTIDE SEQUENCE [GENOMIC DNA] OF 1-167</scope>
</reference>
<reference key="3">
    <citation type="journal article" date="1996" name="DNA Res.">
        <title>Sequence analysis of the genome of the unicellular cyanobacterium Synechocystis sp. strain PCC6803. II. Sequence determination of the entire genome and assignment of potential protein-coding regions.</title>
        <authorList>
            <person name="Kaneko T."/>
            <person name="Sato S."/>
            <person name="Kotani H."/>
            <person name="Tanaka A."/>
            <person name="Asamizu E."/>
            <person name="Nakamura Y."/>
            <person name="Miyajima N."/>
            <person name="Hirosawa M."/>
            <person name="Sugiura M."/>
            <person name="Sasamoto S."/>
            <person name="Kimura T."/>
            <person name="Hosouchi T."/>
            <person name="Matsuno A."/>
            <person name="Muraki A."/>
            <person name="Nakazaki N."/>
            <person name="Naruo K."/>
            <person name="Okumura S."/>
            <person name="Shimpo S."/>
            <person name="Takeuchi C."/>
            <person name="Wada T."/>
            <person name="Watanabe A."/>
            <person name="Yamada M."/>
            <person name="Yasuda M."/>
            <person name="Tabata S."/>
        </authorList>
    </citation>
    <scope>NUCLEOTIDE SEQUENCE [LARGE SCALE GENOMIC DNA]</scope>
    <source>
        <strain>ATCC 27184 / PCC 6803 / Kazusa</strain>
    </source>
</reference>
<protein>
    <recommendedName>
        <fullName evidence="1">3-methyl-2-oxobutanoate hydroxymethyltransferase</fullName>
        <ecNumber evidence="1">2.1.2.11</ecNumber>
    </recommendedName>
    <alternativeName>
        <fullName evidence="1">Ketopantoate hydroxymethyltransferase</fullName>
        <shortName evidence="1">KPHMT</shortName>
    </alternativeName>
</protein>
<feature type="chain" id="PRO_0000184900" description="3-methyl-2-oxobutanoate hydroxymethyltransferase">
    <location>
        <begin position="1"/>
        <end position="260"/>
    </location>
</feature>
<feature type="active site" description="Proton acceptor" evidence="1">
    <location>
        <position position="182"/>
    </location>
</feature>
<feature type="binding site" evidence="1">
    <location>
        <begin position="44"/>
        <end position="45"/>
    </location>
    <ligand>
        <name>3-methyl-2-oxobutanoate</name>
        <dbReference type="ChEBI" id="CHEBI:11851"/>
    </ligand>
</feature>
<feature type="binding site" evidence="1">
    <location>
        <position position="44"/>
    </location>
    <ligand>
        <name>Mg(2+)</name>
        <dbReference type="ChEBI" id="CHEBI:18420"/>
    </ligand>
</feature>
<feature type="binding site" evidence="1">
    <location>
        <position position="83"/>
    </location>
    <ligand>
        <name>3-methyl-2-oxobutanoate</name>
        <dbReference type="ChEBI" id="CHEBI:11851"/>
    </ligand>
</feature>
<feature type="binding site" evidence="1">
    <location>
        <position position="83"/>
    </location>
    <ligand>
        <name>Mg(2+)</name>
        <dbReference type="ChEBI" id="CHEBI:18420"/>
    </ligand>
</feature>
<feature type="binding site" evidence="1">
    <location>
        <position position="113"/>
    </location>
    <ligand>
        <name>3-methyl-2-oxobutanoate</name>
        <dbReference type="ChEBI" id="CHEBI:11851"/>
    </ligand>
</feature>
<feature type="binding site" evidence="1">
    <location>
        <position position="115"/>
    </location>
    <ligand>
        <name>Mg(2+)</name>
        <dbReference type="ChEBI" id="CHEBI:18420"/>
    </ligand>
</feature>
<proteinExistence type="inferred from homology"/>
<gene>
    <name evidence="1" type="primary">panB</name>
    <name type="ordered locus">slr0526</name>
</gene>